<evidence type="ECO:0000255" key="1">
    <source>
        <dbReference type="HAMAP-Rule" id="MF_00700"/>
    </source>
</evidence>
<protein>
    <recommendedName>
        <fullName evidence="1">DNA primase small subunit PriS</fullName>
        <ecNumber evidence="1">2.7.7.-</ecNumber>
    </recommendedName>
</protein>
<organism>
    <name type="scientific">Thermoplasma acidophilum (strain ATCC 25905 / DSM 1728 / JCM 9062 / NBRC 15155 / AMRC-C165)</name>
    <dbReference type="NCBI Taxonomy" id="273075"/>
    <lineage>
        <taxon>Archaea</taxon>
        <taxon>Methanobacteriati</taxon>
        <taxon>Thermoplasmatota</taxon>
        <taxon>Thermoplasmata</taxon>
        <taxon>Thermoplasmatales</taxon>
        <taxon>Thermoplasmataceae</taxon>
        <taxon>Thermoplasma</taxon>
    </lineage>
</organism>
<gene>
    <name evidence="1" type="primary">priS</name>
    <name type="synonym">priA</name>
    <name type="ordered locus">Ta0975</name>
</gene>
<comment type="function">
    <text evidence="1">Catalytic subunit of DNA primase, an RNA polymerase that catalyzes the synthesis of short RNA molecules used as primers for DNA polymerase during DNA replication. The small subunit contains the primase catalytic core and has DNA synthesis activity on its own. Binding to the large subunit stabilizes and modulates the activity, increasing the rate of DNA synthesis while decreasing the length of the DNA fragments, and conferring RNA synthesis capability. The DNA polymerase activity may enable DNA primase to also catalyze primer extension after primer synthesis. May also play a role in DNA repair.</text>
</comment>
<comment type="cofactor">
    <cofactor evidence="1">
        <name>Mg(2+)</name>
        <dbReference type="ChEBI" id="CHEBI:18420"/>
    </cofactor>
    <cofactor evidence="1">
        <name>Mn(2+)</name>
        <dbReference type="ChEBI" id="CHEBI:29035"/>
    </cofactor>
</comment>
<comment type="subunit">
    <text evidence="1">Heterodimer of a small subunit (PriS) and a large subunit (PriL).</text>
</comment>
<comment type="similarity">
    <text evidence="1">Belongs to the eukaryotic-type primase small subunit family.</text>
</comment>
<accession>Q9HJJ2</accession>
<keyword id="KW-0235">DNA replication</keyword>
<keyword id="KW-0240">DNA-directed RNA polymerase</keyword>
<keyword id="KW-0460">Magnesium</keyword>
<keyword id="KW-0464">Manganese</keyword>
<keyword id="KW-0479">Metal-binding</keyword>
<keyword id="KW-0548">Nucleotidyltransferase</keyword>
<keyword id="KW-0639">Primosome</keyword>
<keyword id="KW-1185">Reference proteome</keyword>
<keyword id="KW-0804">Transcription</keyword>
<keyword id="KW-0808">Transferase</keyword>
<proteinExistence type="inferred from homology"/>
<dbReference type="EC" id="2.7.7.-" evidence="1"/>
<dbReference type="EMBL" id="AL445066">
    <property type="protein sequence ID" value="CAC12104.1"/>
    <property type="molecule type" value="Genomic_DNA"/>
</dbReference>
<dbReference type="SMR" id="Q9HJJ2"/>
<dbReference type="STRING" id="273075.gene:9572193"/>
<dbReference type="PaxDb" id="273075-Ta0975m"/>
<dbReference type="EnsemblBacteria" id="CAC12104">
    <property type="protein sequence ID" value="CAC12104"/>
    <property type="gene ID" value="CAC12104"/>
</dbReference>
<dbReference type="KEGG" id="tac:Ta0975"/>
<dbReference type="eggNOG" id="arCOG04110">
    <property type="taxonomic scope" value="Archaea"/>
</dbReference>
<dbReference type="HOGENOM" id="CLU_056123_1_0_2"/>
<dbReference type="InParanoid" id="Q9HJJ2"/>
<dbReference type="Proteomes" id="UP000001024">
    <property type="component" value="Chromosome"/>
</dbReference>
<dbReference type="GO" id="GO:0000428">
    <property type="term" value="C:DNA-directed RNA polymerase complex"/>
    <property type="evidence" value="ECO:0007669"/>
    <property type="project" value="UniProtKB-KW"/>
</dbReference>
<dbReference type="GO" id="GO:1990077">
    <property type="term" value="C:primosome complex"/>
    <property type="evidence" value="ECO:0007669"/>
    <property type="project" value="UniProtKB-KW"/>
</dbReference>
<dbReference type="GO" id="GO:0003899">
    <property type="term" value="F:DNA-directed RNA polymerase activity"/>
    <property type="evidence" value="ECO:0007669"/>
    <property type="project" value="InterPro"/>
</dbReference>
<dbReference type="GO" id="GO:0046872">
    <property type="term" value="F:metal ion binding"/>
    <property type="evidence" value="ECO:0007669"/>
    <property type="project" value="UniProtKB-KW"/>
</dbReference>
<dbReference type="GO" id="GO:0006269">
    <property type="term" value="P:DNA replication, synthesis of primer"/>
    <property type="evidence" value="ECO:0007669"/>
    <property type="project" value="UniProtKB-UniRule"/>
</dbReference>
<dbReference type="CDD" id="cd04860">
    <property type="entry name" value="AE_Prim_S"/>
    <property type="match status" value="1"/>
</dbReference>
<dbReference type="Gene3D" id="3.90.920.10">
    <property type="entry name" value="DNA primase, PRIM domain"/>
    <property type="match status" value="1"/>
</dbReference>
<dbReference type="HAMAP" id="MF_00700">
    <property type="entry name" value="DNA_primase_sml_arc"/>
    <property type="match status" value="1"/>
</dbReference>
<dbReference type="InterPro" id="IPR002755">
    <property type="entry name" value="DNA_primase_S"/>
</dbReference>
<dbReference type="InterPro" id="IPR014052">
    <property type="entry name" value="DNA_primase_ssu_euk/arc"/>
</dbReference>
<dbReference type="InterPro" id="IPR023639">
    <property type="entry name" value="DNA_primase_ssu_PriS"/>
</dbReference>
<dbReference type="NCBIfam" id="NF001641">
    <property type="entry name" value="PRK00419.1-3"/>
    <property type="match status" value="1"/>
</dbReference>
<dbReference type="PANTHER" id="PTHR10536">
    <property type="entry name" value="DNA PRIMASE SMALL SUBUNIT"/>
    <property type="match status" value="1"/>
</dbReference>
<dbReference type="Pfam" id="PF01896">
    <property type="entry name" value="DNA_primase_S"/>
    <property type="match status" value="1"/>
</dbReference>
<dbReference type="SUPFAM" id="SSF56747">
    <property type="entry name" value="Prim-pol domain"/>
    <property type="match status" value="1"/>
</dbReference>
<sequence length="322" mass="36925">MIDLFRRYYRENNIDPPELISKREVGYMTFSGEVIRHLKINNRFELNMLLRDAAPMHVYSSAAYYRKPDERKMPEKEWGGADLIFDLDSDHLPGSEKLSQKEMLIQIRDQTERLVSDFLIADFGIPKSSIKIYFSGNRGYHVHISDDRVYRLGSDARREITDYITGNSLDETVVRRAIDMLGIASGGWPAVVSKELGEASPANQRRESDLRKAIKRARENHSVLIDSPVTYDIHRIIRMPNTLHGKSGLIVKEVEIDHLGEFDPFQECIPDQFRDGEYDVFLPEKIKPVEIGGIESPKMPGKHRVKTFMAVYLVASGRAVFP</sequence>
<reference key="1">
    <citation type="journal article" date="2000" name="Nature">
        <title>The genome sequence of the thermoacidophilic scavenger Thermoplasma acidophilum.</title>
        <authorList>
            <person name="Ruepp A."/>
            <person name="Graml W."/>
            <person name="Santos-Martinez M.-L."/>
            <person name="Koretke K.K."/>
            <person name="Volker C."/>
            <person name="Mewes H.-W."/>
            <person name="Frishman D."/>
            <person name="Stocker S."/>
            <person name="Lupas A.N."/>
            <person name="Baumeister W."/>
        </authorList>
    </citation>
    <scope>NUCLEOTIDE SEQUENCE [LARGE SCALE GENOMIC DNA]</scope>
    <source>
        <strain>ATCC 25905 / DSM 1728 / JCM 9062 / NBRC 15155 / AMRC-C165</strain>
    </source>
</reference>
<name>PRIS_THEAC</name>
<feature type="chain" id="PRO_0000046756" description="DNA primase small subunit PriS">
    <location>
        <begin position="1"/>
        <end position="322"/>
    </location>
</feature>
<feature type="active site" evidence="1">
    <location>
        <position position="86"/>
    </location>
</feature>
<feature type="active site" evidence="1">
    <location>
        <position position="88"/>
    </location>
</feature>
<feature type="active site" evidence="1">
    <location>
        <position position="226"/>
    </location>
</feature>